<reference evidence="4" key="1">
    <citation type="submission" date="1997-06" db="EMBL/GenBank/DDBJ databases">
        <title>Paraquat mediates differential gene expression in C. elegans.</title>
        <authorList>
            <person name="Tawe W.N."/>
            <person name="Eschbach M.-L."/>
            <person name="Walter R.D."/>
            <person name="Henkle-Duehrsen K."/>
        </authorList>
    </citation>
    <scope>NUCLEOTIDE SEQUENCE [MRNA]</scope>
    <source>
        <strain>Bristol N2</strain>
    </source>
</reference>
<reference key="2">
    <citation type="journal article" date="1998" name="Science">
        <title>Genome sequence of the nematode C. elegans: a platform for investigating biology.</title>
        <authorList>
            <consortium name="The C. elegans sequencing consortium"/>
        </authorList>
    </citation>
    <scope>NUCLEOTIDE SEQUENCE [LARGE SCALE GENOMIC DNA]</scope>
    <source>
        <strain>Bristol N2</strain>
    </source>
</reference>
<feature type="chain" id="PRO_0000185926" description="Glutathione S-transferase 3">
    <location>
        <begin position="1"/>
        <end position="207"/>
    </location>
</feature>
<feature type="domain" description="GST N-terminal">
    <location>
        <begin position="2"/>
        <end position="79"/>
    </location>
</feature>
<feature type="domain" description="GST C-terminal">
    <location>
        <begin position="81"/>
        <end position="207"/>
    </location>
</feature>
<feature type="binding site" evidence="1">
    <location>
        <position position="8"/>
    </location>
    <ligand>
        <name>glutathione</name>
        <dbReference type="ChEBI" id="CHEBI:57925"/>
    </ligand>
</feature>
<feature type="binding site" evidence="2">
    <location>
        <position position="43"/>
    </location>
    <ligand>
        <name>glutathione</name>
        <dbReference type="ChEBI" id="CHEBI:57925"/>
    </ligand>
</feature>
<feature type="binding site" evidence="1">
    <location>
        <begin position="49"/>
        <end position="51"/>
    </location>
    <ligand>
        <name>glutathione</name>
        <dbReference type="ChEBI" id="CHEBI:57925"/>
    </ligand>
</feature>
<feature type="binding site" evidence="1">
    <location>
        <begin position="63"/>
        <end position="64"/>
    </location>
    <ligand>
        <name>glutathione</name>
        <dbReference type="ChEBI" id="CHEBI:57925"/>
    </ligand>
</feature>
<organism>
    <name type="scientific">Caenorhabditis elegans</name>
    <dbReference type="NCBI Taxonomy" id="6239"/>
    <lineage>
        <taxon>Eukaryota</taxon>
        <taxon>Metazoa</taxon>
        <taxon>Ecdysozoa</taxon>
        <taxon>Nematoda</taxon>
        <taxon>Chromadorea</taxon>
        <taxon>Rhabditida</taxon>
        <taxon>Rhabditina</taxon>
        <taxon>Rhabditomorpha</taxon>
        <taxon>Rhabditoidea</taxon>
        <taxon>Rhabditidae</taxon>
        <taxon>Peloderinae</taxon>
        <taxon>Caenorhabditis</taxon>
    </lineage>
</organism>
<gene>
    <name type="primary">gst-3</name>
    <name type="ORF">K08F4.11</name>
</gene>
<comment type="function">
    <text evidence="3">Conjugation of reduced glutathione to a wide number of exogenous and endogenous hydrophobic electrophiles.</text>
</comment>
<comment type="catalytic activity">
    <reaction evidence="3">
        <text>RX + glutathione = an S-substituted glutathione + a halide anion + H(+)</text>
        <dbReference type="Rhea" id="RHEA:16437"/>
        <dbReference type="ChEBI" id="CHEBI:15378"/>
        <dbReference type="ChEBI" id="CHEBI:16042"/>
        <dbReference type="ChEBI" id="CHEBI:17792"/>
        <dbReference type="ChEBI" id="CHEBI:57925"/>
        <dbReference type="ChEBI" id="CHEBI:90779"/>
        <dbReference type="EC" id="2.5.1.18"/>
    </reaction>
</comment>
<comment type="similarity">
    <text evidence="4">Belongs to the GST superfamily. Sigma family.</text>
</comment>
<keyword id="KW-1185">Reference proteome</keyword>
<keyword id="KW-0808">Transferase</keyword>
<accession>O16116</accession>
<accession>Q21357</accession>
<dbReference type="EC" id="2.5.1.18"/>
<dbReference type="EMBL" id="AF010241">
    <property type="protein sequence ID" value="AAB65419.1"/>
    <property type="molecule type" value="mRNA"/>
</dbReference>
<dbReference type="EMBL" id="Z68879">
    <property type="protein sequence ID" value="CAA93088.2"/>
    <property type="molecule type" value="Genomic_DNA"/>
</dbReference>
<dbReference type="PIR" id="T23485">
    <property type="entry name" value="T23485"/>
</dbReference>
<dbReference type="PIR" id="T37464">
    <property type="entry name" value="T37464"/>
</dbReference>
<dbReference type="RefSeq" id="NP_501846.1">
    <property type="nucleotide sequence ID" value="NM_069445.8"/>
</dbReference>
<dbReference type="SMR" id="O16116"/>
<dbReference type="FunCoup" id="O16116">
    <property type="interactions" value="149"/>
</dbReference>
<dbReference type="STRING" id="6239.K08F4.11.1"/>
<dbReference type="PaxDb" id="6239-K08F4.11"/>
<dbReference type="PeptideAtlas" id="O16116"/>
<dbReference type="EnsemblMetazoa" id="K08F4.11.1">
    <property type="protein sequence ID" value="K08F4.11.1"/>
    <property type="gene ID" value="WBGene00001751"/>
</dbReference>
<dbReference type="GeneID" id="177883"/>
<dbReference type="KEGG" id="cel:CELE_K08F4.11"/>
<dbReference type="UCSC" id="K08F4.11">
    <property type="organism name" value="c. elegans"/>
</dbReference>
<dbReference type="AGR" id="WB:WBGene00001751"/>
<dbReference type="CTD" id="177883"/>
<dbReference type="WormBase" id="K08F4.11">
    <property type="protein sequence ID" value="CE25050"/>
    <property type="gene ID" value="WBGene00001751"/>
    <property type="gene designation" value="gst-3"/>
</dbReference>
<dbReference type="eggNOG" id="KOG1695">
    <property type="taxonomic scope" value="Eukaryota"/>
</dbReference>
<dbReference type="GeneTree" id="ENSGT00970000195993"/>
<dbReference type="HOGENOM" id="CLU_039475_1_0_1"/>
<dbReference type="InParanoid" id="O16116"/>
<dbReference type="OMA" id="NELTWAD"/>
<dbReference type="OrthoDB" id="414243at2759"/>
<dbReference type="PhylomeDB" id="O16116"/>
<dbReference type="PRO" id="PR:O16116"/>
<dbReference type="Proteomes" id="UP000001940">
    <property type="component" value="Chromosome IV"/>
</dbReference>
<dbReference type="GO" id="GO:0004364">
    <property type="term" value="F:glutathione transferase activity"/>
    <property type="evidence" value="ECO:0000318"/>
    <property type="project" value="GO_Central"/>
</dbReference>
<dbReference type="GO" id="GO:0006749">
    <property type="term" value="P:glutathione metabolic process"/>
    <property type="evidence" value="ECO:0000318"/>
    <property type="project" value="GO_Central"/>
</dbReference>
<dbReference type="CDD" id="cd03192">
    <property type="entry name" value="GST_C_Sigma_like"/>
    <property type="match status" value="1"/>
</dbReference>
<dbReference type="CDD" id="cd03039">
    <property type="entry name" value="GST_N_Sigma_like"/>
    <property type="match status" value="1"/>
</dbReference>
<dbReference type="FunFam" id="1.20.1050.10:FF:000031">
    <property type="entry name" value="Glutathione S-Transferase"/>
    <property type="match status" value="1"/>
</dbReference>
<dbReference type="FunFam" id="3.40.30.10:FF:000543">
    <property type="entry name" value="Hematopoietic prostaglandin D synthase"/>
    <property type="match status" value="1"/>
</dbReference>
<dbReference type="Gene3D" id="1.20.1050.10">
    <property type="match status" value="1"/>
</dbReference>
<dbReference type="Gene3D" id="3.40.30.10">
    <property type="entry name" value="Glutaredoxin"/>
    <property type="match status" value="1"/>
</dbReference>
<dbReference type="InterPro" id="IPR010987">
    <property type="entry name" value="Glutathione-S-Trfase_C-like"/>
</dbReference>
<dbReference type="InterPro" id="IPR036282">
    <property type="entry name" value="Glutathione-S-Trfase_C_sf"/>
</dbReference>
<dbReference type="InterPro" id="IPR040079">
    <property type="entry name" value="Glutathione_S-Trfase"/>
</dbReference>
<dbReference type="InterPro" id="IPR004045">
    <property type="entry name" value="Glutathione_S-Trfase_N"/>
</dbReference>
<dbReference type="InterPro" id="IPR004046">
    <property type="entry name" value="GST_C"/>
</dbReference>
<dbReference type="InterPro" id="IPR050213">
    <property type="entry name" value="GST_superfamily"/>
</dbReference>
<dbReference type="InterPro" id="IPR036249">
    <property type="entry name" value="Thioredoxin-like_sf"/>
</dbReference>
<dbReference type="PANTHER" id="PTHR11571">
    <property type="entry name" value="GLUTATHIONE S-TRANSFERASE"/>
    <property type="match status" value="1"/>
</dbReference>
<dbReference type="PANTHER" id="PTHR11571:SF44">
    <property type="entry name" value="GLUTATHIONE S-TRANSFERASE 2-RELATED"/>
    <property type="match status" value="1"/>
</dbReference>
<dbReference type="Pfam" id="PF14497">
    <property type="entry name" value="GST_C_3"/>
    <property type="match status" value="1"/>
</dbReference>
<dbReference type="Pfam" id="PF02798">
    <property type="entry name" value="GST_N"/>
    <property type="match status" value="1"/>
</dbReference>
<dbReference type="SFLD" id="SFLDG01205">
    <property type="entry name" value="AMPS.1"/>
    <property type="match status" value="1"/>
</dbReference>
<dbReference type="SFLD" id="SFLDS00019">
    <property type="entry name" value="Glutathione_Transferase_(cytos"/>
    <property type="match status" value="1"/>
</dbReference>
<dbReference type="SUPFAM" id="SSF47616">
    <property type="entry name" value="GST C-terminal domain-like"/>
    <property type="match status" value="1"/>
</dbReference>
<dbReference type="SUPFAM" id="SSF52833">
    <property type="entry name" value="Thioredoxin-like"/>
    <property type="match status" value="1"/>
</dbReference>
<dbReference type="PROSITE" id="PS50405">
    <property type="entry name" value="GST_CTER"/>
    <property type="match status" value="1"/>
</dbReference>
<dbReference type="PROSITE" id="PS50404">
    <property type="entry name" value="GST_NTER"/>
    <property type="match status" value="1"/>
</dbReference>
<name>GST3_CAEEL</name>
<protein>
    <recommendedName>
        <fullName>Glutathione S-transferase 3</fullName>
        <ecNumber>2.5.1.18</ecNumber>
    </recommendedName>
    <alternativeName>
        <fullName>CeGST3</fullName>
    </alternativeName>
    <alternativeName>
        <fullName>GST class-sigma</fullName>
    </alternativeName>
</protein>
<sequence>MVHYKLTYFNARGLAEISRQLFHMAGVEFEDERINEEKFSQLKPTFPSGQVPILCIDGAQFSQSTAIARYLARKFGFVGQTAEEELQADEVVDTFKDFIESFRKFVIAVLSGESEEILKNIREEVIKPAVKTYTAYLKAILEKSSSGYLVGNELTWADLVIADNLTTLINAELLDIENDKLLKEFREKIIETPKLKEWLAKRPETRF</sequence>
<proteinExistence type="evidence at transcript level"/>
<evidence type="ECO:0000250" key="1">
    <source>
        <dbReference type="UniProtKB" id="O60760"/>
    </source>
</evidence>
<evidence type="ECO:0000250" key="2">
    <source>
        <dbReference type="UniProtKB" id="P46088"/>
    </source>
</evidence>
<evidence type="ECO:0000250" key="3">
    <source>
        <dbReference type="UniProtKB" id="P46436"/>
    </source>
</evidence>
<evidence type="ECO:0000305" key="4"/>